<proteinExistence type="inferred from homology"/>
<feature type="chain" id="PRO_0000098659" description="5-methyltetrahydropteroyltriglutamate--homocysteine methyltransferase">
    <location>
        <begin position="1"/>
        <end position="742"/>
    </location>
</feature>
<feature type="active site" description="Proton donor" evidence="1">
    <location>
        <position position="683"/>
    </location>
</feature>
<feature type="binding site" evidence="1">
    <location>
        <begin position="18"/>
        <end position="21"/>
    </location>
    <ligand>
        <name>5-methyltetrahydropteroyltri-L-glutamate</name>
        <dbReference type="ChEBI" id="CHEBI:58207"/>
    </ligand>
</feature>
<feature type="binding site" evidence="1">
    <location>
        <position position="112"/>
    </location>
    <ligand>
        <name>5-methyltetrahydropteroyltri-L-glutamate</name>
        <dbReference type="ChEBI" id="CHEBI:58207"/>
    </ligand>
</feature>
<feature type="binding site" evidence="1">
    <location>
        <begin position="420"/>
        <end position="422"/>
    </location>
    <ligand>
        <name>L-homocysteine</name>
        <dbReference type="ChEBI" id="CHEBI:58199"/>
    </ligand>
</feature>
<feature type="binding site" evidence="1">
    <location>
        <begin position="420"/>
        <end position="422"/>
    </location>
    <ligand>
        <name>L-methionine</name>
        <dbReference type="ChEBI" id="CHEBI:57844"/>
    </ligand>
</feature>
<feature type="binding site" evidence="1">
    <location>
        <position position="473"/>
    </location>
    <ligand>
        <name>L-homocysteine</name>
        <dbReference type="ChEBI" id="CHEBI:58199"/>
    </ligand>
</feature>
<feature type="binding site" evidence="1">
    <location>
        <position position="473"/>
    </location>
    <ligand>
        <name>L-methionine</name>
        <dbReference type="ChEBI" id="CHEBI:57844"/>
    </ligand>
</feature>
<feature type="binding site" evidence="1">
    <location>
        <position position="550"/>
    </location>
    <ligand>
        <name>5-methyltetrahydropteroyltri-L-glutamate</name>
        <dbReference type="ChEBI" id="CHEBI:58207"/>
    </ligand>
</feature>
<feature type="binding site" evidence="1">
    <location>
        <position position="588"/>
    </location>
    <ligand>
        <name>L-homocysteine</name>
        <dbReference type="ChEBI" id="CHEBI:58199"/>
    </ligand>
</feature>
<feature type="binding site" evidence="1">
    <location>
        <position position="588"/>
    </location>
    <ligand>
        <name>L-methionine</name>
        <dbReference type="ChEBI" id="CHEBI:57844"/>
    </ligand>
</feature>
<feature type="binding site" evidence="1">
    <location>
        <position position="594"/>
    </location>
    <ligand>
        <name>5-methyltetrahydropteroyltri-L-glutamate</name>
        <dbReference type="ChEBI" id="CHEBI:58207"/>
    </ligand>
</feature>
<feature type="binding site" evidence="1">
    <location>
        <position position="630"/>
    </location>
    <ligand>
        <name>Zn(2+)</name>
        <dbReference type="ChEBI" id="CHEBI:29105"/>
        <note>catalytic</note>
    </ligand>
</feature>
<feature type="binding site" evidence="1">
    <location>
        <position position="632"/>
    </location>
    <ligand>
        <name>Zn(2+)</name>
        <dbReference type="ChEBI" id="CHEBI:29105"/>
        <note>catalytic</note>
    </ligand>
</feature>
<feature type="binding site" evidence="1">
    <location>
        <position position="654"/>
    </location>
    <ligand>
        <name>Zn(2+)</name>
        <dbReference type="ChEBI" id="CHEBI:29105"/>
        <note>catalytic</note>
    </ligand>
</feature>
<feature type="binding site" evidence="1">
    <location>
        <position position="715"/>
    </location>
    <ligand>
        <name>Zn(2+)</name>
        <dbReference type="ChEBI" id="CHEBI:29105"/>
        <note>catalytic</note>
    </ligand>
</feature>
<protein>
    <recommendedName>
        <fullName evidence="1">5-methyltetrahydropteroyltriglutamate--homocysteine methyltransferase</fullName>
        <ecNumber evidence="1">2.1.1.14</ecNumber>
    </recommendedName>
    <alternativeName>
        <fullName evidence="1">Cobalamin-independent methionine synthase</fullName>
    </alternativeName>
    <alternativeName>
        <fullName evidence="1">Methionine synthase, vitamin-B12 independent isozyme</fullName>
    </alternativeName>
</protein>
<reference key="1">
    <citation type="journal article" date="2001" name="Lancet">
        <title>Whole genome sequencing of meticillin-resistant Staphylococcus aureus.</title>
        <authorList>
            <person name="Kuroda M."/>
            <person name="Ohta T."/>
            <person name="Uchiyama I."/>
            <person name="Baba T."/>
            <person name="Yuzawa H."/>
            <person name="Kobayashi I."/>
            <person name="Cui L."/>
            <person name="Oguchi A."/>
            <person name="Aoki K."/>
            <person name="Nagai Y."/>
            <person name="Lian J.-Q."/>
            <person name="Ito T."/>
            <person name="Kanamori M."/>
            <person name="Matsumaru H."/>
            <person name="Maruyama A."/>
            <person name="Murakami H."/>
            <person name="Hosoyama A."/>
            <person name="Mizutani-Ui Y."/>
            <person name="Takahashi N.K."/>
            <person name="Sawano T."/>
            <person name="Inoue R."/>
            <person name="Kaito C."/>
            <person name="Sekimizu K."/>
            <person name="Hirakawa H."/>
            <person name="Kuhara S."/>
            <person name="Goto S."/>
            <person name="Yabuzaki J."/>
            <person name="Kanehisa M."/>
            <person name="Yamashita A."/>
            <person name="Oshima K."/>
            <person name="Furuya K."/>
            <person name="Yoshino C."/>
            <person name="Shiba T."/>
            <person name="Hattori M."/>
            <person name="Ogasawara N."/>
            <person name="Hayashi H."/>
            <person name="Hiramatsu K."/>
        </authorList>
    </citation>
    <scope>NUCLEOTIDE SEQUENCE [LARGE SCALE GENOMIC DNA]</scope>
    <source>
        <strain>Mu50 / ATCC 700699</strain>
    </source>
</reference>
<dbReference type="EC" id="2.1.1.14" evidence="1"/>
<dbReference type="EMBL" id="BA000017">
    <property type="protein sequence ID" value="BAB56518.1"/>
    <property type="molecule type" value="Genomic_DNA"/>
</dbReference>
<dbReference type="RefSeq" id="WP_000207623.1">
    <property type="nucleotide sequence ID" value="NC_002758.2"/>
</dbReference>
<dbReference type="SMR" id="P65342"/>
<dbReference type="KEGG" id="sav:SAV0356"/>
<dbReference type="HOGENOM" id="CLU_013175_0_0_9"/>
<dbReference type="PhylomeDB" id="P65342"/>
<dbReference type="UniPathway" id="UPA00051">
    <property type="reaction ID" value="UER00082"/>
</dbReference>
<dbReference type="Proteomes" id="UP000002481">
    <property type="component" value="Chromosome"/>
</dbReference>
<dbReference type="GO" id="GO:0003871">
    <property type="term" value="F:5-methyltetrahydropteroyltriglutamate-homocysteine S-methyltransferase activity"/>
    <property type="evidence" value="ECO:0007669"/>
    <property type="project" value="UniProtKB-UniRule"/>
</dbReference>
<dbReference type="GO" id="GO:0008270">
    <property type="term" value="F:zinc ion binding"/>
    <property type="evidence" value="ECO:0007669"/>
    <property type="project" value="InterPro"/>
</dbReference>
<dbReference type="GO" id="GO:0009086">
    <property type="term" value="P:methionine biosynthetic process"/>
    <property type="evidence" value="ECO:0007669"/>
    <property type="project" value="UniProtKB-UniRule"/>
</dbReference>
<dbReference type="GO" id="GO:0032259">
    <property type="term" value="P:methylation"/>
    <property type="evidence" value="ECO:0007669"/>
    <property type="project" value="UniProtKB-KW"/>
</dbReference>
<dbReference type="CDD" id="cd03311">
    <property type="entry name" value="CIMS_C_terminal_like"/>
    <property type="match status" value="1"/>
</dbReference>
<dbReference type="CDD" id="cd03312">
    <property type="entry name" value="CIMS_N_terminal_like"/>
    <property type="match status" value="1"/>
</dbReference>
<dbReference type="Gene3D" id="3.20.20.210">
    <property type="match status" value="2"/>
</dbReference>
<dbReference type="HAMAP" id="MF_00172">
    <property type="entry name" value="Meth_synth"/>
    <property type="match status" value="1"/>
</dbReference>
<dbReference type="InterPro" id="IPR013215">
    <property type="entry name" value="Cbl-indep_Met_Synth_N"/>
</dbReference>
<dbReference type="InterPro" id="IPR006276">
    <property type="entry name" value="Cobalamin-indep_Met_synthase"/>
</dbReference>
<dbReference type="InterPro" id="IPR002629">
    <property type="entry name" value="Met_Synth_C/arc"/>
</dbReference>
<dbReference type="InterPro" id="IPR038071">
    <property type="entry name" value="UROD/MetE-like_sf"/>
</dbReference>
<dbReference type="NCBIfam" id="TIGR01371">
    <property type="entry name" value="met_syn_B12ind"/>
    <property type="match status" value="1"/>
</dbReference>
<dbReference type="NCBIfam" id="NF003556">
    <property type="entry name" value="PRK05222.1"/>
    <property type="match status" value="1"/>
</dbReference>
<dbReference type="PANTHER" id="PTHR30519">
    <property type="entry name" value="5-METHYLTETRAHYDROPTEROYLTRIGLUTAMATE--HOMOCYSTEINE METHYLTRANSFERASE"/>
    <property type="match status" value="1"/>
</dbReference>
<dbReference type="Pfam" id="PF08267">
    <property type="entry name" value="Meth_synt_1"/>
    <property type="match status" value="1"/>
</dbReference>
<dbReference type="Pfam" id="PF01717">
    <property type="entry name" value="Meth_synt_2"/>
    <property type="match status" value="1"/>
</dbReference>
<dbReference type="PIRSF" id="PIRSF000382">
    <property type="entry name" value="MeTrfase_B12_ind"/>
    <property type="match status" value="1"/>
</dbReference>
<dbReference type="SUPFAM" id="SSF51726">
    <property type="entry name" value="UROD/MetE-like"/>
    <property type="match status" value="2"/>
</dbReference>
<name>METE_STAAM</name>
<organism>
    <name type="scientific">Staphylococcus aureus (strain Mu50 / ATCC 700699)</name>
    <dbReference type="NCBI Taxonomy" id="158878"/>
    <lineage>
        <taxon>Bacteria</taxon>
        <taxon>Bacillati</taxon>
        <taxon>Bacillota</taxon>
        <taxon>Bacilli</taxon>
        <taxon>Bacillales</taxon>
        <taxon>Staphylococcaceae</taxon>
        <taxon>Staphylococcus</taxon>
    </lineage>
</organism>
<comment type="function">
    <text evidence="1">Catalyzes the transfer of a methyl group from 5-methyltetrahydrofolate to homocysteine resulting in methionine formation.</text>
</comment>
<comment type="catalytic activity">
    <reaction evidence="1">
        <text>5-methyltetrahydropteroyltri-L-glutamate + L-homocysteine = tetrahydropteroyltri-L-glutamate + L-methionine</text>
        <dbReference type="Rhea" id="RHEA:21196"/>
        <dbReference type="ChEBI" id="CHEBI:57844"/>
        <dbReference type="ChEBI" id="CHEBI:58140"/>
        <dbReference type="ChEBI" id="CHEBI:58199"/>
        <dbReference type="ChEBI" id="CHEBI:58207"/>
        <dbReference type="EC" id="2.1.1.14"/>
    </reaction>
</comment>
<comment type="cofactor">
    <cofactor evidence="1">
        <name>Zn(2+)</name>
        <dbReference type="ChEBI" id="CHEBI:29105"/>
    </cofactor>
    <text evidence="1">Binds 1 zinc ion per subunit.</text>
</comment>
<comment type="pathway">
    <text evidence="1">Amino-acid biosynthesis; L-methionine biosynthesis via de novo pathway; L-methionine from L-homocysteine (MetE route): step 1/1.</text>
</comment>
<comment type="similarity">
    <text evidence="1">Belongs to the vitamin-B12 independent methionine synthase family.</text>
</comment>
<gene>
    <name evidence="1" type="primary">metE</name>
    <name type="ordered locus">SAV0356</name>
</gene>
<keyword id="KW-0028">Amino-acid biosynthesis</keyword>
<keyword id="KW-0479">Metal-binding</keyword>
<keyword id="KW-0486">Methionine biosynthesis</keyword>
<keyword id="KW-0489">Methyltransferase</keyword>
<keyword id="KW-0677">Repeat</keyword>
<keyword id="KW-0808">Transferase</keyword>
<keyword id="KW-0862">Zinc</keyword>
<sequence>MTTIKTSNLGFPRLGRKREWKKAIESYWAKKISKEELDQTLTDLHKENLLLQKYYHLDSIPVGDFSLYDHILDTSLLFNIIPERFQGRTIDDDLLFDIARGNKDHVASALIKWFNTNYHYIVPEWDNVEPKVSRNVLLDRFKYAQSLNVNAHPVIVGPITFVKLSKGGHQTFEEKVKTLLPLYKEVFESLIDAGAEYIQVDEPILVTDDSESYENITREAYDYFEKAGVAKKLVIQTYFERAHLKFLSSLPVGGLGLDFVHDNGYNLKQIEAGDFDKSKTLYAGIIDGRNVWASDIEAKKVLIDKLLAHTNELVIQPSSSLLHVPVSLDDETLDTSVGEGLSFATEKLDELDALRRLLNQNDSVKYDKLKARYERFQNQSFKNLDYDFESVRTSRQSPFAQRIEQQQKRLNLPDLPTTTIGSFPQSREVRKYRADWKNKRITDEAYETFLKNEIARWIKIQEDIGLDVLVHGEFERNDMVEFFGEKLQGFLVTKFGWVQSYGSRAVKPPIIYGDVKWTAPLTVDETVYAQSLTDKPVKGMLTGPVTILNWSFERVDLPRKVVQDQIALAINEEVLALEAAGIKVIQVDEPALREGLPLRSEYHEQYLKDAVLSFKLATSSVRDETQIHTHMCYSQFGQIIHAIHDLDADVISIETSRSHGDLIKDFEDINYDLGIGLGVYDIHSPRIPTKEEITTAINRSLQQIDRSLFWVNPDCGLKTRKEEEVKDALTVLVNAVKAKRQE</sequence>
<accession>P65342</accession>
<accession>Q99WM1</accession>
<evidence type="ECO:0000255" key="1">
    <source>
        <dbReference type="HAMAP-Rule" id="MF_00172"/>
    </source>
</evidence>